<accession>Q7V9Z2</accession>
<reference key="1">
    <citation type="journal article" date="2003" name="Proc. Natl. Acad. Sci. U.S.A.">
        <title>Genome sequence of the cyanobacterium Prochlorococcus marinus SS120, a nearly minimal oxyphototrophic genome.</title>
        <authorList>
            <person name="Dufresne A."/>
            <person name="Salanoubat M."/>
            <person name="Partensky F."/>
            <person name="Artiguenave F."/>
            <person name="Axmann I.M."/>
            <person name="Barbe V."/>
            <person name="Duprat S."/>
            <person name="Galperin M.Y."/>
            <person name="Koonin E.V."/>
            <person name="Le Gall F."/>
            <person name="Makarova K.S."/>
            <person name="Ostrowski M."/>
            <person name="Oztas S."/>
            <person name="Robert C."/>
            <person name="Rogozin I.B."/>
            <person name="Scanlan D.J."/>
            <person name="Tandeau de Marsac N."/>
            <person name="Weissenbach J."/>
            <person name="Wincker P."/>
            <person name="Wolf Y.I."/>
            <person name="Hess W.R."/>
        </authorList>
    </citation>
    <scope>NUCLEOTIDE SEQUENCE [LARGE SCALE GENOMIC DNA]</scope>
    <source>
        <strain>SARG / CCMP1375 / SS120</strain>
    </source>
</reference>
<keyword id="KW-0413">Isomerase</keyword>
<keyword id="KW-0663">Pyridoxal phosphate</keyword>
<keyword id="KW-1185">Reference proteome</keyword>
<evidence type="ECO:0000255" key="1">
    <source>
        <dbReference type="HAMAP-Rule" id="MF_01201"/>
    </source>
</evidence>
<feature type="chain" id="PRO_1000066025" description="Alanine racemase">
    <location>
        <begin position="1"/>
        <end position="386"/>
    </location>
</feature>
<feature type="active site" description="Proton acceptor; specific for D-alanine" evidence="1">
    <location>
        <position position="48"/>
    </location>
</feature>
<feature type="active site" description="Proton acceptor; specific for L-alanine" evidence="1">
    <location>
        <position position="279"/>
    </location>
</feature>
<feature type="binding site" evidence="1">
    <location>
        <position position="147"/>
    </location>
    <ligand>
        <name>substrate</name>
    </ligand>
</feature>
<feature type="binding site" evidence="1">
    <location>
        <position position="327"/>
    </location>
    <ligand>
        <name>substrate</name>
    </ligand>
</feature>
<feature type="modified residue" description="N6-(pyridoxal phosphate)lysine" evidence="1">
    <location>
        <position position="48"/>
    </location>
</feature>
<name>ALR_PROMA</name>
<protein>
    <recommendedName>
        <fullName evidence="1">Alanine racemase</fullName>
        <ecNumber evidence="1">5.1.1.1</ecNumber>
    </recommendedName>
</protein>
<comment type="function">
    <text evidence="1">Catalyzes the interconversion of L-alanine and D-alanine. May also act on other amino acids.</text>
</comment>
<comment type="catalytic activity">
    <reaction evidence="1">
        <text>L-alanine = D-alanine</text>
        <dbReference type="Rhea" id="RHEA:20249"/>
        <dbReference type="ChEBI" id="CHEBI:57416"/>
        <dbReference type="ChEBI" id="CHEBI:57972"/>
        <dbReference type="EC" id="5.1.1.1"/>
    </reaction>
</comment>
<comment type="cofactor">
    <cofactor evidence="1">
        <name>pyridoxal 5'-phosphate</name>
        <dbReference type="ChEBI" id="CHEBI:597326"/>
    </cofactor>
</comment>
<comment type="pathway">
    <text evidence="1">Amino-acid biosynthesis; D-alanine biosynthesis; D-alanine from L-alanine: step 1/1.</text>
</comment>
<comment type="similarity">
    <text evidence="1">Belongs to the alanine racemase family.</text>
</comment>
<gene>
    <name type="primary">alr</name>
    <name type="ordered locus">Pro_1681</name>
</gene>
<organism>
    <name type="scientific">Prochlorococcus marinus (strain SARG / CCMP1375 / SS120)</name>
    <dbReference type="NCBI Taxonomy" id="167539"/>
    <lineage>
        <taxon>Bacteria</taxon>
        <taxon>Bacillati</taxon>
        <taxon>Cyanobacteriota</taxon>
        <taxon>Cyanophyceae</taxon>
        <taxon>Synechococcales</taxon>
        <taxon>Prochlorococcaceae</taxon>
        <taxon>Prochlorococcus</taxon>
    </lineage>
</organism>
<sequence length="386" mass="41899">MATTSMPLNKIDPRQRAWVEVSPDAIKANTLAIRSLLDEQCLLMAVVKADGYGHGSETVAEAALAGGATNLGVATLQEALELRKAGIVCPILVLGNLINPEDLDACIHWDLMPTLSSAREALLCNQIAESHDKEFCVHIKVDTGMTRLGCDLRLASELIQLVDNLKNLSLRGIYSHLALADVEANGQANSFTSKQKEKFETLLSSVMPRGKPLYRHLANSAGTLRDKGLHFDMVRVGLALYGYSPLKDLRNNFSLQPALAVRAKVTLLRDVPSDTGVSYGHTFITQRPSRLAVVGIGYADGISRALSGKMSVLIDGKFYPQVGSITMDQLVIDITESPQIQIGSVVTLLGVDGDSAITPYDWSEISGSIPWEILCSFKYRLPRVVI</sequence>
<dbReference type="EC" id="5.1.1.1" evidence="1"/>
<dbReference type="EMBL" id="AE017126">
    <property type="protein sequence ID" value="AAQ00725.1"/>
    <property type="molecule type" value="Genomic_DNA"/>
</dbReference>
<dbReference type="RefSeq" id="NP_876072.1">
    <property type="nucleotide sequence ID" value="NC_005042.1"/>
</dbReference>
<dbReference type="RefSeq" id="WP_011125830.1">
    <property type="nucleotide sequence ID" value="NC_005042.1"/>
</dbReference>
<dbReference type="SMR" id="Q7V9Z2"/>
<dbReference type="STRING" id="167539.Pro_1681"/>
<dbReference type="EnsemblBacteria" id="AAQ00725">
    <property type="protein sequence ID" value="AAQ00725"/>
    <property type="gene ID" value="Pro_1681"/>
</dbReference>
<dbReference type="KEGG" id="pma:Pro_1681"/>
<dbReference type="PATRIC" id="fig|167539.5.peg.1775"/>
<dbReference type="eggNOG" id="COG0787">
    <property type="taxonomic scope" value="Bacteria"/>
</dbReference>
<dbReference type="HOGENOM" id="CLU_028393_2_2_3"/>
<dbReference type="OrthoDB" id="9813814at2"/>
<dbReference type="UniPathway" id="UPA00042">
    <property type="reaction ID" value="UER00497"/>
</dbReference>
<dbReference type="Proteomes" id="UP000001420">
    <property type="component" value="Chromosome"/>
</dbReference>
<dbReference type="GO" id="GO:0005829">
    <property type="term" value="C:cytosol"/>
    <property type="evidence" value="ECO:0007669"/>
    <property type="project" value="TreeGrafter"/>
</dbReference>
<dbReference type="GO" id="GO:0008784">
    <property type="term" value="F:alanine racemase activity"/>
    <property type="evidence" value="ECO:0007669"/>
    <property type="project" value="UniProtKB-UniRule"/>
</dbReference>
<dbReference type="GO" id="GO:0030170">
    <property type="term" value="F:pyridoxal phosphate binding"/>
    <property type="evidence" value="ECO:0007669"/>
    <property type="project" value="UniProtKB-UniRule"/>
</dbReference>
<dbReference type="GO" id="GO:0030632">
    <property type="term" value="P:D-alanine biosynthetic process"/>
    <property type="evidence" value="ECO:0007669"/>
    <property type="project" value="UniProtKB-UniRule"/>
</dbReference>
<dbReference type="CDD" id="cd00430">
    <property type="entry name" value="PLPDE_III_AR"/>
    <property type="match status" value="1"/>
</dbReference>
<dbReference type="FunFam" id="3.20.20.10:FF:000002">
    <property type="entry name" value="Alanine racemase"/>
    <property type="match status" value="1"/>
</dbReference>
<dbReference type="Gene3D" id="3.20.20.10">
    <property type="entry name" value="Alanine racemase"/>
    <property type="match status" value="1"/>
</dbReference>
<dbReference type="Gene3D" id="2.40.37.10">
    <property type="entry name" value="Lyase, Ornithine Decarboxylase, Chain A, domain 1"/>
    <property type="match status" value="1"/>
</dbReference>
<dbReference type="HAMAP" id="MF_01201">
    <property type="entry name" value="Ala_racemase"/>
    <property type="match status" value="1"/>
</dbReference>
<dbReference type="InterPro" id="IPR000821">
    <property type="entry name" value="Ala_racemase"/>
</dbReference>
<dbReference type="InterPro" id="IPR009006">
    <property type="entry name" value="Ala_racemase/Decarboxylase_C"/>
</dbReference>
<dbReference type="InterPro" id="IPR011079">
    <property type="entry name" value="Ala_racemase_C"/>
</dbReference>
<dbReference type="InterPro" id="IPR001608">
    <property type="entry name" value="Ala_racemase_N"/>
</dbReference>
<dbReference type="InterPro" id="IPR020622">
    <property type="entry name" value="Ala_racemase_pyridoxalP-BS"/>
</dbReference>
<dbReference type="InterPro" id="IPR029066">
    <property type="entry name" value="PLP-binding_barrel"/>
</dbReference>
<dbReference type="NCBIfam" id="TIGR00492">
    <property type="entry name" value="alr"/>
    <property type="match status" value="1"/>
</dbReference>
<dbReference type="PANTHER" id="PTHR30511">
    <property type="entry name" value="ALANINE RACEMASE"/>
    <property type="match status" value="1"/>
</dbReference>
<dbReference type="PANTHER" id="PTHR30511:SF0">
    <property type="entry name" value="ALANINE RACEMASE, CATABOLIC-RELATED"/>
    <property type="match status" value="1"/>
</dbReference>
<dbReference type="Pfam" id="PF00842">
    <property type="entry name" value="Ala_racemase_C"/>
    <property type="match status" value="1"/>
</dbReference>
<dbReference type="Pfam" id="PF01168">
    <property type="entry name" value="Ala_racemase_N"/>
    <property type="match status" value="1"/>
</dbReference>
<dbReference type="PRINTS" id="PR00992">
    <property type="entry name" value="ALARACEMASE"/>
</dbReference>
<dbReference type="SMART" id="SM01005">
    <property type="entry name" value="Ala_racemase_C"/>
    <property type="match status" value="1"/>
</dbReference>
<dbReference type="SUPFAM" id="SSF50621">
    <property type="entry name" value="Alanine racemase C-terminal domain-like"/>
    <property type="match status" value="1"/>
</dbReference>
<dbReference type="SUPFAM" id="SSF51419">
    <property type="entry name" value="PLP-binding barrel"/>
    <property type="match status" value="1"/>
</dbReference>
<dbReference type="PROSITE" id="PS00395">
    <property type="entry name" value="ALANINE_RACEMASE"/>
    <property type="match status" value="1"/>
</dbReference>
<proteinExistence type="inferred from homology"/>